<feature type="chain" id="PRO_0000119946" description="F-box only protein 44">
    <location>
        <begin position="1"/>
        <end position="255"/>
    </location>
</feature>
<feature type="domain" description="F-box" evidence="2">
    <location>
        <begin position="3"/>
        <end position="50"/>
    </location>
</feature>
<feature type="domain" description="FBA" evidence="3">
    <location>
        <begin position="71"/>
        <end position="252"/>
    </location>
</feature>
<feature type="splice variant" id="VSP_011348" description="In isoform 2." evidence="5">
    <original>SEVSH</original>
    <variation>REGLM</variation>
    <location>
        <begin position="207"/>
        <end position="211"/>
    </location>
</feature>
<feature type="splice variant" id="VSP_011349" description="In isoform 2." evidence="5">
    <location>
        <begin position="212"/>
        <end position="255"/>
    </location>
</feature>
<name>FBX44_MOUSE</name>
<dbReference type="EMBL" id="AK077452">
    <property type="protein sequence ID" value="BAC36807.1"/>
    <property type="molecule type" value="mRNA"/>
</dbReference>
<dbReference type="EMBL" id="BC028884">
    <property type="protein sequence ID" value="AAH28884.1"/>
    <property type="molecule type" value="mRNA"/>
</dbReference>
<dbReference type="CCDS" id="CCDS18934.1">
    <molecule id="Q8BK26-1"/>
</dbReference>
<dbReference type="RefSeq" id="NP_001155323.1">
    <property type="nucleotide sequence ID" value="NM_001161851.2"/>
</dbReference>
<dbReference type="RefSeq" id="NP_001155324.1">
    <property type="nucleotide sequence ID" value="NM_001161852.2"/>
</dbReference>
<dbReference type="RefSeq" id="NP_001342630.1">
    <molecule id="Q8BK26-2"/>
    <property type="nucleotide sequence ID" value="NM_001355701.1"/>
</dbReference>
<dbReference type="RefSeq" id="NP_775577.2">
    <property type="nucleotide sequence ID" value="NM_173401.5"/>
</dbReference>
<dbReference type="RefSeq" id="XP_011248538.1">
    <property type="nucleotide sequence ID" value="XM_011250236.2"/>
</dbReference>
<dbReference type="SMR" id="Q8BK26"/>
<dbReference type="BioGRID" id="231052">
    <property type="interactions" value="4"/>
</dbReference>
<dbReference type="FunCoup" id="Q8BK26">
    <property type="interactions" value="56"/>
</dbReference>
<dbReference type="STRING" id="10090.ENSMUSP00000054022"/>
<dbReference type="GlyGen" id="Q8BK26">
    <property type="glycosylation" value="3 sites, 1 O-linked glycan (3 sites)"/>
</dbReference>
<dbReference type="iPTMnet" id="Q8BK26"/>
<dbReference type="PaxDb" id="10090-ENSMUSP00000054022"/>
<dbReference type="ProteomicsDB" id="272969">
    <molecule id="Q8BK26-1"/>
</dbReference>
<dbReference type="ProteomicsDB" id="272970">
    <molecule id="Q8BK26-2"/>
</dbReference>
<dbReference type="DNASU" id="230903"/>
<dbReference type="GeneID" id="230903"/>
<dbReference type="KEGG" id="mmu:230903"/>
<dbReference type="UCSC" id="uc008vui.3">
    <molecule id="Q8BK26-2"/>
    <property type="organism name" value="mouse"/>
</dbReference>
<dbReference type="AGR" id="MGI:1354744"/>
<dbReference type="CTD" id="93611"/>
<dbReference type="MGI" id="MGI:1354744">
    <property type="gene designation" value="Fbxo44"/>
</dbReference>
<dbReference type="eggNOG" id="ENOG502RZA6">
    <property type="taxonomic scope" value="Eukaryota"/>
</dbReference>
<dbReference type="InParanoid" id="Q8BK26"/>
<dbReference type="PhylomeDB" id="Q8BK26"/>
<dbReference type="Reactome" id="R-MMU-8951664">
    <property type="pathway name" value="Neddylation"/>
</dbReference>
<dbReference type="Reactome" id="R-MMU-983168">
    <property type="pathway name" value="Antigen processing: Ubiquitination &amp; Proteasome degradation"/>
</dbReference>
<dbReference type="BioGRID-ORCS" id="230903">
    <property type="hits" value="3 hits in 78 CRISPR screens"/>
</dbReference>
<dbReference type="ChiTaRS" id="Fbxo44">
    <property type="organism name" value="mouse"/>
</dbReference>
<dbReference type="PRO" id="PR:Q8BK26"/>
<dbReference type="Proteomes" id="UP000000589">
    <property type="component" value="Unplaced"/>
</dbReference>
<dbReference type="RNAct" id="Q8BK26">
    <property type="molecule type" value="protein"/>
</dbReference>
<dbReference type="GO" id="GO:0005737">
    <property type="term" value="C:cytoplasm"/>
    <property type="evidence" value="ECO:0007669"/>
    <property type="project" value="UniProtKB-ARBA"/>
</dbReference>
<dbReference type="GO" id="GO:0019005">
    <property type="term" value="C:SCF ubiquitin ligase complex"/>
    <property type="evidence" value="ECO:0000250"/>
    <property type="project" value="UniProtKB"/>
</dbReference>
<dbReference type="GO" id="GO:0010498">
    <property type="term" value="P:proteasomal protein catabolic process"/>
    <property type="evidence" value="ECO:0000266"/>
    <property type="project" value="MGI"/>
</dbReference>
<dbReference type="CDD" id="cd22168">
    <property type="entry name" value="F-box_FBXO6-like"/>
    <property type="match status" value="1"/>
</dbReference>
<dbReference type="FunFam" id="2.60.120.260:FF:000012">
    <property type="entry name" value="F-box only protein 2"/>
    <property type="match status" value="1"/>
</dbReference>
<dbReference type="FunFam" id="1.20.1280.50:FF:000002">
    <property type="entry name" value="F-box only protein 44"/>
    <property type="match status" value="1"/>
</dbReference>
<dbReference type="Gene3D" id="1.20.1280.50">
    <property type="match status" value="1"/>
</dbReference>
<dbReference type="Gene3D" id="2.60.120.260">
    <property type="entry name" value="Galactose-binding domain-like"/>
    <property type="match status" value="1"/>
</dbReference>
<dbReference type="InterPro" id="IPR007397">
    <property type="entry name" value="F-box-assoc_dom"/>
</dbReference>
<dbReference type="InterPro" id="IPR036047">
    <property type="entry name" value="F-box-like_dom_sf"/>
</dbReference>
<dbReference type="InterPro" id="IPR001810">
    <property type="entry name" value="F-box_dom"/>
</dbReference>
<dbReference type="InterPro" id="IPR039752">
    <property type="entry name" value="F-box_only"/>
</dbReference>
<dbReference type="InterPro" id="IPR008979">
    <property type="entry name" value="Galactose-bd-like_sf"/>
</dbReference>
<dbReference type="PANTHER" id="PTHR12125:SF13">
    <property type="entry name" value="F-BOX ONLY PROTEIN 44"/>
    <property type="match status" value="1"/>
</dbReference>
<dbReference type="PANTHER" id="PTHR12125">
    <property type="entry name" value="F-BOX ONLY PROTEIN 6-LIKE PROTEIN"/>
    <property type="match status" value="1"/>
</dbReference>
<dbReference type="Pfam" id="PF12937">
    <property type="entry name" value="F-box-like"/>
    <property type="match status" value="1"/>
</dbReference>
<dbReference type="Pfam" id="PF04300">
    <property type="entry name" value="FBA"/>
    <property type="match status" value="1"/>
</dbReference>
<dbReference type="SMART" id="SM01198">
    <property type="entry name" value="FBA"/>
    <property type="match status" value="1"/>
</dbReference>
<dbReference type="SUPFAM" id="SSF81383">
    <property type="entry name" value="F-box domain"/>
    <property type="match status" value="1"/>
</dbReference>
<dbReference type="SUPFAM" id="SSF49785">
    <property type="entry name" value="Galactose-binding domain-like"/>
    <property type="match status" value="1"/>
</dbReference>
<dbReference type="PROSITE" id="PS51114">
    <property type="entry name" value="FBA"/>
    <property type="match status" value="1"/>
</dbReference>
<dbReference type="PROSITE" id="PS50181">
    <property type="entry name" value="FBOX"/>
    <property type="match status" value="1"/>
</dbReference>
<organism>
    <name type="scientific">Mus musculus</name>
    <name type="common">Mouse</name>
    <dbReference type="NCBI Taxonomy" id="10090"/>
    <lineage>
        <taxon>Eukaryota</taxon>
        <taxon>Metazoa</taxon>
        <taxon>Chordata</taxon>
        <taxon>Craniata</taxon>
        <taxon>Vertebrata</taxon>
        <taxon>Euteleostomi</taxon>
        <taxon>Mammalia</taxon>
        <taxon>Eutheria</taxon>
        <taxon>Euarchontoglires</taxon>
        <taxon>Glires</taxon>
        <taxon>Rodentia</taxon>
        <taxon>Myomorpha</taxon>
        <taxon>Muroidea</taxon>
        <taxon>Muridae</taxon>
        <taxon>Murinae</taxon>
        <taxon>Mus</taxon>
        <taxon>Mus</taxon>
    </lineage>
</organism>
<accession>Q8BK26</accession>
<accession>Q8K128</accession>
<proteinExistence type="evidence at protein level"/>
<sequence>MAVGNINELPENILLELFIHIPARQLLLRCRPVCSLWRDLIDLVTLWKRKCLQEGFITEDWDQPVADWKIFYFLRSLQRNLLHNPCAEEGFEFWSLDVNGGDEWKVEDLSKDQRKEFPNDQVKKYFVTSYYTCLKSQVVDLKAEGYWEELMDTTRPDIEVKDWFAARPDCGSKYQLCVQLLSSAHAPLGTFQPDPVMIQQKSDAKWSEVSHTFSNYPPGVRYIWFQHGGVDTHYWAGWYGPRVTNSSITIGPPLP</sequence>
<gene>
    <name type="primary">Fbxo44</name>
    <name type="synonym">Fbxo6a</name>
</gene>
<protein>
    <recommendedName>
        <fullName>F-box only protein 44</fullName>
    </recommendedName>
    <alternativeName>
        <fullName>F-box only protein 6a</fullName>
    </alternativeName>
</protein>
<keyword id="KW-0025">Alternative splicing</keyword>
<keyword id="KW-1185">Reference proteome</keyword>
<keyword id="KW-0833">Ubl conjugation pathway</keyword>
<comment type="function">
    <text evidence="1">Substrate-recognition component of the SCF (SKP1-CUL1-F-box protein)-type E3 ubiquitin ligase complex.</text>
</comment>
<comment type="subunit">
    <text evidence="1">Part of a SCF (SKP1-cullin-F-box) protein ligase complex. Interacts with SKP1 and CUL1 (By similarity).</text>
</comment>
<comment type="alternative products">
    <event type="alternative splicing"/>
    <isoform>
        <id>Q8BK26-1</id>
        <name>1</name>
        <sequence type="displayed"/>
    </isoform>
    <isoform>
        <id>Q8BK26-2</id>
        <name>2</name>
        <sequence type="described" ref="VSP_011348 VSP_011349"/>
    </isoform>
</comment>
<comment type="tissue specificity">
    <text evidence="4">Expressed in brain, liver, pancreas and adipose tissue (at protein level). Widely expressed.</text>
</comment>
<comment type="developmental stage">
    <text evidence="4">Strong expression in embryos. Maximally expressed in brain during embryonic development but declined thereafter.</text>
</comment>
<evidence type="ECO:0000250" key="1"/>
<evidence type="ECO:0000255" key="2">
    <source>
        <dbReference type="PROSITE-ProRule" id="PRU00080"/>
    </source>
</evidence>
<evidence type="ECO:0000255" key="3">
    <source>
        <dbReference type="PROSITE-ProRule" id="PRU00482"/>
    </source>
</evidence>
<evidence type="ECO:0000269" key="4">
    <source>
    </source>
</evidence>
<evidence type="ECO:0000303" key="5">
    <source>
    </source>
</evidence>
<reference key="1">
    <citation type="journal article" date="2005" name="Science">
        <title>The transcriptional landscape of the mammalian genome.</title>
        <authorList>
            <person name="Carninci P."/>
            <person name="Kasukawa T."/>
            <person name="Katayama S."/>
            <person name="Gough J."/>
            <person name="Frith M.C."/>
            <person name="Maeda N."/>
            <person name="Oyama R."/>
            <person name="Ravasi T."/>
            <person name="Lenhard B."/>
            <person name="Wells C."/>
            <person name="Kodzius R."/>
            <person name="Shimokawa K."/>
            <person name="Bajic V.B."/>
            <person name="Brenner S.E."/>
            <person name="Batalov S."/>
            <person name="Forrest A.R."/>
            <person name="Zavolan M."/>
            <person name="Davis M.J."/>
            <person name="Wilming L.G."/>
            <person name="Aidinis V."/>
            <person name="Allen J.E."/>
            <person name="Ambesi-Impiombato A."/>
            <person name="Apweiler R."/>
            <person name="Aturaliya R.N."/>
            <person name="Bailey T.L."/>
            <person name="Bansal M."/>
            <person name="Baxter L."/>
            <person name="Beisel K.W."/>
            <person name="Bersano T."/>
            <person name="Bono H."/>
            <person name="Chalk A.M."/>
            <person name="Chiu K.P."/>
            <person name="Choudhary V."/>
            <person name="Christoffels A."/>
            <person name="Clutterbuck D.R."/>
            <person name="Crowe M.L."/>
            <person name="Dalla E."/>
            <person name="Dalrymple B.P."/>
            <person name="de Bono B."/>
            <person name="Della Gatta G."/>
            <person name="di Bernardo D."/>
            <person name="Down T."/>
            <person name="Engstrom P."/>
            <person name="Fagiolini M."/>
            <person name="Faulkner G."/>
            <person name="Fletcher C.F."/>
            <person name="Fukushima T."/>
            <person name="Furuno M."/>
            <person name="Futaki S."/>
            <person name="Gariboldi M."/>
            <person name="Georgii-Hemming P."/>
            <person name="Gingeras T.R."/>
            <person name="Gojobori T."/>
            <person name="Green R.E."/>
            <person name="Gustincich S."/>
            <person name="Harbers M."/>
            <person name="Hayashi Y."/>
            <person name="Hensch T.K."/>
            <person name="Hirokawa N."/>
            <person name="Hill D."/>
            <person name="Huminiecki L."/>
            <person name="Iacono M."/>
            <person name="Ikeo K."/>
            <person name="Iwama A."/>
            <person name="Ishikawa T."/>
            <person name="Jakt M."/>
            <person name="Kanapin A."/>
            <person name="Katoh M."/>
            <person name="Kawasawa Y."/>
            <person name="Kelso J."/>
            <person name="Kitamura H."/>
            <person name="Kitano H."/>
            <person name="Kollias G."/>
            <person name="Krishnan S.P."/>
            <person name="Kruger A."/>
            <person name="Kummerfeld S.K."/>
            <person name="Kurochkin I.V."/>
            <person name="Lareau L.F."/>
            <person name="Lazarevic D."/>
            <person name="Lipovich L."/>
            <person name="Liu J."/>
            <person name="Liuni S."/>
            <person name="McWilliam S."/>
            <person name="Madan Babu M."/>
            <person name="Madera M."/>
            <person name="Marchionni L."/>
            <person name="Matsuda H."/>
            <person name="Matsuzawa S."/>
            <person name="Miki H."/>
            <person name="Mignone F."/>
            <person name="Miyake S."/>
            <person name="Morris K."/>
            <person name="Mottagui-Tabar S."/>
            <person name="Mulder N."/>
            <person name="Nakano N."/>
            <person name="Nakauchi H."/>
            <person name="Ng P."/>
            <person name="Nilsson R."/>
            <person name="Nishiguchi S."/>
            <person name="Nishikawa S."/>
            <person name="Nori F."/>
            <person name="Ohara O."/>
            <person name="Okazaki Y."/>
            <person name="Orlando V."/>
            <person name="Pang K.C."/>
            <person name="Pavan W.J."/>
            <person name="Pavesi G."/>
            <person name="Pesole G."/>
            <person name="Petrovsky N."/>
            <person name="Piazza S."/>
            <person name="Reed J."/>
            <person name="Reid J.F."/>
            <person name="Ring B.Z."/>
            <person name="Ringwald M."/>
            <person name="Rost B."/>
            <person name="Ruan Y."/>
            <person name="Salzberg S.L."/>
            <person name="Sandelin A."/>
            <person name="Schneider C."/>
            <person name="Schoenbach C."/>
            <person name="Sekiguchi K."/>
            <person name="Semple C.A."/>
            <person name="Seno S."/>
            <person name="Sessa L."/>
            <person name="Sheng Y."/>
            <person name="Shibata Y."/>
            <person name="Shimada H."/>
            <person name="Shimada K."/>
            <person name="Silva D."/>
            <person name="Sinclair B."/>
            <person name="Sperling S."/>
            <person name="Stupka E."/>
            <person name="Sugiura K."/>
            <person name="Sultana R."/>
            <person name="Takenaka Y."/>
            <person name="Taki K."/>
            <person name="Tammoja K."/>
            <person name="Tan S.L."/>
            <person name="Tang S."/>
            <person name="Taylor M.S."/>
            <person name="Tegner J."/>
            <person name="Teichmann S.A."/>
            <person name="Ueda H.R."/>
            <person name="van Nimwegen E."/>
            <person name="Verardo R."/>
            <person name="Wei C.L."/>
            <person name="Yagi K."/>
            <person name="Yamanishi H."/>
            <person name="Zabarovsky E."/>
            <person name="Zhu S."/>
            <person name="Zimmer A."/>
            <person name="Hide W."/>
            <person name="Bult C."/>
            <person name="Grimmond S.M."/>
            <person name="Teasdale R.D."/>
            <person name="Liu E.T."/>
            <person name="Brusic V."/>
            <person name="Quackenbush J."/>
            <person name="Wahlestedt C."/>
            <person name="Mattick J.S."/>
            <person name="Hume D.A."/>
            <person name="Kai C."/>
            <person name="Sasaki D."/>
            <person name="Tomaru Y."/>
            <person name="Fukuda S."/>
            <person name="Kanamori-Katayama M."/>
            <person name="Suzuki M."/>
            <person name="Aoki J."/>
            <person name="Arakawa T."/>
            <person name="Iida J."/>
            <person name="Imamura K."/>
            <person name="Itoh M."/>
            <person name="Kato T."/>
            <person name="Kawaji H."/>
            <person name="Kawagashira N."/>
            <person name="Kawashima T."/>
            <person name="Kojima M."/>
            <person name="Kondo S."/>
            <person name="Konno H."/>
            <person name="Nakano K."/>
            <person name="Ninomiya N."/>
            <person name="Nishio T."/>
            <person name="Okada M."/>
            <person name="Plessy C."/>
            <person name="Shibata K."/>
            <person name="Shiraki T."/>
            <person name="Suzuki S."/>
            <person name="Tagami M."/>
            <person name="Waki K."/>
            <person name="Watahiki A."/>
            <person name="Okamura-Oho Y."/>
            <person name="Suzuki H."/>
            <person name="Kawai J."/>
            <person name="Hayashizaki Y."/>
        </authorList>
    </citation>
    <scope>NUCLEOTIDE SEQUENCE [LARGE SCALE MRNA] (ISOFORM 1)</scope>
    <source>
        <strain>C57BL/6J</strain>
    </source>
</reference>
<reference key="2">
    <citation type="journal article" date="2004" name="Genome Res.">
        <title>The status, quality, and expansion of the NIH full-length cDNA project: the Mammalian Gene Collection (MGC).</title>
        <authorList>
            <consortium name="The MGC Project Team"/>
        </authorList>
    </citation>
    <scope>NUCLEOTIDE SEQUENCE [LARGE SCALE MRNA] (ISOFORM 2)</scope>
    <source>
        <tissue>Salivary gland</tissue>
    </source>
</reference>
<reference key="3">
    <citation type="journal article" date="2008" name="J. Biol. Chem.">
        <title>Diversity in tissue expression, substrate binding, and SCF complex formation for a lectin family of ubiquitin ligases.</title>
        <authorList>
            <person name="Glenn K.A."/>
            <person name="Nelson R.F."/>
            <person name="Wen H.M."/>
            <person name="Mallinger A.J."/>
            <person name="Paulson H.L."/>
        </authorList>
    </citation>
    <scope>TISSUE SPECIFICITY</scope>
    <scope>DEVELOPMENTAL STAGE</scope>
</reference>
<reference key="4">
    <citation type="journal article" date="2010" name="Cell">
        <title>A tissue-specific atlas of mouse protein phosphorylation and expression.</title>
        <authorList>
            <person name="Huttlin E.L."/>
            <person name="Jedrychowski M.P."/>
            <person name="Elias J.E."/>
            <person name="Goswami T."/>
            <person name="Rad R."/>
            <person name="Beausoleil S.A."/>
            <person name="Villen J."/>
            <person name="Haas W."/>
            <person name="Sowa M.E."/>
            <person name="Gygi S.P."/>
        </authorList>
    </citation>
    <scope>IDENTIFICATION BY MASS SPECTROMETRY [LARGE SCALE ANALYSIS]</scope>
    <source>
        <tissue>Brain</tissue>
    </source>
</reference>